<reference key="1">
    <citation type="journal article" date="2008" name="Genomics">
        <title>Evolution in the laboratory: the genome of Halobacterium salinarum strain R1 compared to that of strain NRC-1.</title>
        <authorList>
            <person name="Pfeiffer F."/>
            <person name="Schuster S.C."/>
            <person name="Broicher A."/>
            <person name="Falb M."/>
            <person name="Palm P."/>
            <person name="Rodewald K."/>
            <person name="Ruepp A."/>
            <person name="Soppa J."/>
            <person name="Tittor J."/>
            <person name="Oesterhelt D."/>
        </authorList>
    </citation>
    <scope>NUCLEOTIDE SEQUENCE [LARGE SCALE GENOMIC DNA]</scope>
    <source>
        <strain>ATCC 29341 / DSM 671 / R1</strain>
    </source>
</reference>
<dbReference type="EC" id="4.1.99.22" evidence="1"/>
<dbReference type="EMBL" id="AM774415">
    <property type="protein sequence ID" value="CAP12969.1"/>
    <property type="molecule type" value="Genomic_DNA"/>
</dbReference>
<dbReference type="RefSeq" id="WP_012289091.1">
    <property type="nucleotide sequence ID" value="NC_010364.1"/>
</dbReference>
<dbReference type="SMR" id="B0R2L5"/>
<dbReference type="EnsemblBacteria" id="CAP12969">
    <property type="protein sequence ID" value="CAP12969"/>
    <property type="gene ID" value="OE_1142F"/>
</dbReference>
<dbReference type="GeneID" id="68693067"/>
<dbReference type="KEGG" id="hsl:OE_1142F"/>
<dbReference type="HOGENOM" id="CLU_009273_0_1_2"/>
<dbReference type="PhylomeDB" id="B0R2L5"/>
<dbReference type="UniPathway" id="UPA00344"/>
<dbReference type="Proteomes" id="UP000001321">
    <property type="component" value="Chromosome"/>
</dbReference>
<dbReference type="GO" id="GO:0051539">
    <property type="term" value="F:4 iron, 4 sulfur cluster binding"/>
    <property type="evidence" value="ECO:0007669"/>
    <property type="project" value="UniProtKB-UniRule"/>
</dbReference>
<dbReference type="GO" id="GO:0061799">
    <property type="term" value="F:cyclic pyranopterin monophosphate synthase activity"/>
    <property type="evidence" value="ECO:0007669"/>
    <property type="project" value="TreeGrafter"/>
</dbReference>
<dbReference type="GO" id="GO:0061798">
    <property type="term" value="F:GTP 3',8'-cyclase activity"/>
    <property type="evidence" value="ECO:0007669"/>
    <property type="project" value="UniProtKB-UniRule"/>
</dbReference>
<dbReference type="GO" id="GO:0005525">
    <property type="term" value="F:GTP binding"/>
    <property type="evidence" value="ECO:0007669"/>
    <property type="project" value="UniProtKB-UniRule"/>
</dbReference>
<dbReference type="GO" id="GO:0046872">
    <property type="term" value="F:metal ion binding"/>
    <property type="evidence" value="ECO:0007669"/>
    <property type="project" value="UniProtKB-KW"/>
</dbReference>
<dbReference type="GO" id="GO:1904047">
    <property type="term" value="F:S-adenosyl-L-methionine binding"/>
    <property type="evidence" value="ECO:0007669"/>
    <property type="project" value="UniProtKB-UniRule"/>
</dbReference>
<dbReference type="GO" id="GO:0006777">
    <property type="term" value="P:Mo-molybdopterin cofactor biosynthetic process"/>
    <property type="evidence" value="ECO:0007669"/>
    <property type="project" value="UniProtKB-UniRule"/>
</dbReference>
<dbReference type="CDD" id="cd01335">
    <property type="entry name" value="Radical_SAM"/>
    <property type="match status" value="1"/>
</dbReference>
<dbReference type="CDD" id="cd21117">
    <property type="entry name" value="Twitch_MoaA"/>
    <property type="match status" value="1"/>
</dbReference>
<dbReference type="Gene3D" id="3.20.20.70">
    <property type="entry name" value="Aldolase class I"/>
    <property type="match status" value="1"/>
</dbReference>
<dbReference type="HAMAP" id="MF_01225_A">
    <property type="entry name" value="MoaA_A"/>
    <property type="match status" value="1"/>
</dbReference>
<dbReference type="InterPro" id="IPR013785">
    <property type="entry name" value="Aldolase_TIM"/>
</dbReference>
<dbReference type="InterPro" id="IPR006638">
    <property type="entry name" value="Elp3/MiaA/NifB-like_rSAM"/>
</dbReference>
<dbReference type="InterPro" id="IPR013485">
    <property type="entry name" value="MoaA_arc"/>
</dbReference>
<dbReference type="InterPro" id="IPR000385">
    <property type="entry name" value="MoaA_NifB_PqqE_Fe-S-bd_CS"/>
</dbReference>
<dbReference type="InterPro" id="IPR010505">
    <property type="entry name" value="MoaA_twitch"/>
</dbReference>
<dbReference type="InterPro" id="IPR050105">
    <property type="entry name" value="MoCo_biosynth_MoaA/MoaC"/>
</dbReference>
<dbReference type="InterPro" id="IPR007197">
    <property type="entry name" value="rSAM"/>
</dbReference>
<dbReference type="NCBIfam" id="TIGR02668">
    <property type="entry name" value="moaA_archaeal"/>
    <property type="match status" value="1"/>
</dbReference>
<dbReference type="NCBIfam" id="NF001199">
    <property type="entry name" value="PRK00164.2-1"/>
    <property type="match status" value="1"/>
</dbReference>
<dbReference type="PANTHER" id="PTHR22960:SF0">
    <property type="entry name" value="MOLYBDENUM COFACTOR BIOSYNTHESIS PROTEIN 1"/>
    <property type="match status" value="1"/>
</dbReference>
<dbReference type="PANTHER" id="PTHR22960">
    <property type="entry name" value="MOLYBDOPTERIN COFACTOR SYNTHESIS PROTEIN A"/>
    <property type="match status" value="1"/>
</dbReference>
<dbReference type="Pfam" id="PF06463">
    <property type="entry name" value="Mob_synth_C"/>
    <property type="match status" value="1"/>
</dbReference>
<dbReference type="Pfam" id="PF04055">
    <property type="entry name" value="Radical_SAM"/>
    <property type="match status" value="1"/>
</dbReference>
<dbReference type="SFLD" id="SFLDG01383">
    <property type="entry name" value="cyclic_pyranopterin_phosphate"/>
    <property type="match status" value="1"/>
</dbReference>
<dbReference type="SFLD" id="SFLDG01072">
    <property type="entry name" value="dehydrogenase_like"/>
    <property type="match status" value="1"/>
</dbReference>
<dbReference type="SMART" id="SM00729">
    <property type="entry name" value="Elp3"/>
    <property type="match status" value="1"/>
</dbReference>
<dbReference type="SUPFAM" id="SSF102114">
    <property type="entry name" value="Radical SAM enzymes"/>
    <property type="match status" value="1"/>
</dbReference>
<dbReference type="PROSITE" id="PS01305">
    <property type="entry name" value="MOAA_NIFB_PQQE"/>
    <property type="match status" value="1"/>
</dbReference>
<dbReference type="PROSITE" id="PS51918">
    <property type="entry name" value="RADICAL_SAM"/>
    <property type="match status" value="1"/>
</dbReference>
<gene>
    <name evidence="1" type="primary">moaA</name>
    <name type="ordered locus">OE_1142F</name>
</gene>
<name>MOAA_HALS3</name>
<proteinExistence type="inferred from homology"/>
<protein>
    <recommendedName>
        <fullName evidence="1">Probable GTP 3',8-cyclase</fullName>
        <ecNumber evidence="1">4.1.99.22</ecNumber>
    </recommendedName>
    <alternativeName>
        <fullName evidence="1">Molybdenum cofactor biosynthesis protein A</fullName>
    </alternativeName>
</protein>
<evidence type="ECO:0000255" key="1">
    <source>
        <dbReference type="HAMAP-Rule" id="MF_01225"/>
    </source>
</evidence>
<evidence type="ECO:0000255" key="2">
    <source>
        <dbReference type="PROSITE-ProRule" id="PRU01266"/>
    </source>
</evidence>
<evidence type="ECO:0000256" key="3">
    <source>
        <dbReference type="SAM" id="MobiDB-lite"/>
    </source>
</evidence>
<keyword id="KW-0004">4Fe-4S</keyword>
<keyword id="KW-0342">GTP-binding</keyword>
<keyword id="KW-0408">Iron</keyword>
<keyword id="KW-0411">Iron-sulfur</keyword>
<keyword id="KW-0456">Lyase</keyword>
<keyword id="KW-0479">Metal-binding</keyword>
<keyword id="KW-0501">Molybdenum cofactor biosynthesis</keyword>
<keyword id="KW-0547">Nucleotide-binding</keyword>
<keyword id="KW-0949">S-adenosyl-L-methionine</keyword>
<organism>
    <name type="scientific">Halobacterium salinarum (strain ATCC 29341 / DSM 671 / R1)</name>
    <dbReference type="NCBI Taxonomy" id="478009"/>
    <lineage>
        <taxon>Archaea</taxon>
        <taxon>Methanobacteriati</taxon>
        <taxon>Methanobacteriota</taxon>
        <taxon>Stenosarchaea group</taxon>
        <taxon>Halobacteria</taxon>
        <taxon>Halobacteriales</taxon>
        <taxon>Halobacteriaceae</taxon>
        <taxon>Halobacterium</taxon>
        <taxon>Halobacterium salinarum NRC-34001</taxon>
    </lineage>
</organism>
<comment type="function">
    <text evidence="1">Catalyzes the cyclization of GTP to (8S)-3',8-cyclo-7,8-dihydroguanosine 5'-triphosphate.</text>
</comment>
<comment type="catalytic activity">
    <reaction evidence="1">
        <text>GTP + AH2 + S-adenosyl-L-methionine = (8S)-3',8-cyclo-7,8-dihydroguanosine 5'-triphosphate + 5'-deoxyadenosine + L-methionine + A + H(+)</text>
        <dbReference type="Rhea" id="RHEA:49576"/>
        <dbReference type="ChEBI" id="CHEBI:13193"/>
        <dbReference type="ChEBI" id="CHEBI:15378"/>
        <dbReference type="ChEBI" id="CHEBI:17319"/>
        <dbReference type="ChEBI" id="CHEBI:17499"/>
        <dbReference type="ChEBI" id="CHEBI:37565"/>
        <dbReference type="ChEBI" id="CHEBI:57844"/>
        <dbReference type="ChEBI" id="CHEBI:59789"/>
        <dbReference type="ChEBI" id="CHEBI:131766"/>
        <dbReference type="EC" id="4.1.99.22"/>
    </reaction>
</comment>
<comment type="cofactor">
    <cofactor evidence="1">
        <name>[4Fe-4S] cluster</name>
        <dbReference type="ChEBI" id="CHEBI:49883"/>
    </cofactor>
    <text evidence="1">Binds 2 [4Fe-4S] clusters. Binds 1 [4Fe-4S] cluster coordinated with 3 cysteines and an exchangeable S-adenosyl-L-methionine and 1 [4Fe-4S] cluster coordinated with 3 cysteines and the GTP-derived substrate.</text>
</comment>
<comment type="pathway">
    <text evidence="1">Cofactor biosynthesis; molybdopterin biosynthesis.</text>
</comment>
<comment type="similarity">
    <text evidence="1">Belongs to the radical SAM superfamily. MoaA family.</text>
</comment>
<sequence>MLEDDFGRDVSGVRVSLTDRCNFDCVYCHNEGLGDTRGPIDPRENELSTDRVVRFLSVAHEFGVDAVKLTGGEPMLRSDLEAIIRRTPDDMAVSMTTNGTFLPGRAADLVDAGLERVNISQDAMDNDAFAELTQSGAYDAVLEGVEAALDAGLAPVKLNMVVFEPTAGYVPEMVDHVAARDGLRLQLIEYMPELAGHPEWAIDIDRVHDWLADRADRIETREMHDRRRYWVSSRDAGSTADDAAQSVTPDGGAHPDQGMVEIVDPVGNPQFCANCHRVRLTHDGYLKGCLNRNDDLRGIGETTQSMRAAFRETVANRVPYYGEYMTRTDDGGWEINDDYLDVEGDRDPYEYAADDSA</sequence>
<feature type="chain" id="PRO_1000139327" description="Probable GTP 3',8-cyclase">
    <location>
        <begin position="1"/>
        <end position="357"/>
    </location>
</feature>
<feature type="domain" description="Radical SAM core" evidence="2">
    <location>
        <begin position="5"/>
        <end position="234"/>
    </location>
</feature>
<feature type="region of interest" description="Disordered" evidence="3">
    <location>
        <begin position="232"/>
        <end position="256"/>
    </location>
</feature>
<feature type="binding site" evidence="1">
    <location>
        <position position="14"/>
    </location>
    <ligand>
        <name>GTP</name>
        <dbReference type="ChEBI" id="CHEBI:37565"/>
    </ligand>
</feature>
<feature type="binding site" evidence="1">
    <location>
        <position position="21"/>
    </location>
    <ligand>
        <name>[4Fe-4S] cluster</name>
        <dbReference type="ChEBI" id="CHEBI:49883"/>
        <label>1</label>
        <note>4Fe-4S-S-AdoMet</note>
    </ligand>
</feature>
<feature type="binding site" evidence="1">
    <location>
        <position position="25"/>
    </location>
    <ligand>
        <name>[4Fe-4S] cluster</name>
        <dbReference type="ChEBI" id="CHEBI:49883"/>
        <label>1</label>
        <note>4Fe-4S-S-AdoMet</note>
    </ligand>
</feature>
<feature type="binding site" evidence="1">
    <location>
        <position position="27"/>
    </location>
    <ligand>
        <name>S-adenosyl-L-methionine</name>
        <dbReference type="ChEBI" id="CHEBI:59789"/>
    </ligand>
</feature>
<feature type="binding site" evidence="1">
    <location>
        <position position="28"/>
    </location>
    <ligand>
        <name>[4Fe-4S] cluster</name>
        <dbReference type="ChEBI" id="CHEBI:49883"/>
        <label>1</label>
        <note>4Fe-4S-S-AdoMet</note>
    </ligand>
</feature>
<feature type="binding site" evidence="1">
    <location>
        <position position="68"/>
    </location>
    <ligand>
        <name>GTP</name>
        <dbReference type="ChEBI" id="CHEBI:37565"/>
    </ligand>
</feature>
<feature type="binding site" evidence="1">
    <location>
        <position position="72"/>
    </location>
    <ligand>
        <name>S-adenosyl-L-methionine</name>
        <dbReference type="ChEBI" id="CHEBI:59789"/>
    </ligand>
</feature>
<feature type="binding site" evidence="1">
    <location>
        <position position="96"/>
    </location>
    <ligand>
        <name>GTP</name>
        <dbReference type="ChEBI" id="CHEBI:37565"/>
    </ligand>
</feature>
<feature type="binding site" evidence="1">
    <location>
        <position position="120"/>
    </location>
    <ligand>
        <name>S-adenosyl-L-methionine</name>
        <dbReference type="ChEBI" id="CHEBI:59789"/>
    </ligand>
</feature>
<feature type="binding site" evidence="1">
    <location>
        <position position="157"/>
    </location>
    <ligand>
        <name>GTP</name>
        <dbReference type="ChEBI" id="CHEBI:37565"/>
    </ligand>
</feature>
<feature type="binding site" evidence="1">
    <location>
        <position position="272"/>
    </location>
    <ligand>
        <name>[4Fe-4S] cluster</name>
        <dbReference type="ChEBI" id="CHEBI:49883"/>
        <label>2</label>
        <note>4Fe-4S-substrate</note>
    </ligand>
</feature>
<feature type="binding site" evidence="1">
    <location>
        <position position="275"/>
    </location>
    <ligand>
        <name>[4Fe-4S] cluster</name>
        <dbReference type="ChEBI" id="CHEBI:49883"/>
        <label>2</label>
        <note>4Fe-4S-substrate</note>
    </ligand>
</feature>
<feature type="binding site" evidence="1">
    <location>
        <begin position="277"/>
        <end position="279"/>
    </location>
    <ligand>
        <name>GTP</name>
        <dbReference type="ChEBI" id="CHEBI:37565"/>
    </ligand>
</feature>
<feature type="binding site" evidence="1">
    <location>
        <position position="289"/>
    </location>
    <ligand>
        <name>[4Fe-4S] cluster</name>
        <dbReference type="ChEBI" id="CHEBI:49883"/>
        <label>2</label>
        <note>4Fe-4S-substrate</note>
    </ligand>
</feature>
<accession>B0R2L5</accession>